<organism>
    <name type="scientific">Escherichia coli (strain 55989 / EAEC)</name>
    <dbReference type="NCBI Taxonomy" id="585055"/>
    <lineage>
        <taxon>Bacteria</taxon>
        <taxon>Pseudomonadati</taxon>
        <taxon>Pseudomonadota</taxon>
        <taxon>Gammaproteobacteria</taxon>
        <taxon>Enterobacterales</taxon>
        <taxon>Enterobacteriaceae</taxon>
        <taxon>Escherichia</taxon>
    </lineage>
</organism>
<reference key="1">
    <citation type="journal article" date="2009" name="PLoS Genet.">
        <title>Organised genome dynamics in the Escherichia coli species results in highly diverse adaptive paths.</title>
        <authorList>
            <person name="Touchon M."/>
            <person name="Hoede C."/>
            <person name="Tenaillon O."/>
            <person name="Barbe V."/>
            <person name="Baeriswyl S."/>
            <person name="Bidet P."/>
            <person name="Bingen E."/>
            <person name="Bonacorsi S."/>
            <person name="Bouchier C."/>
            <person name="Bouvet O."/>
            <person name="Calteau A."/>
            <person name="Chiapello H."/>
            <person name="Clermont O."/>
            <person name="Cruveiller S."/>
            <person name="Danchin A."/>
            <person name="Diard M."/>
            <person name="Dossat C."/>
            <person name="Karoui M.E."/>
            <person name="Frapy E."/>
            <person name="Garry L."/>
            <person name="Ghigo J.M."/>
            <person name="Gilles A.M."/>
            <person name="Johnson J."/>
            <person name="Le Bouguenec C."/>
            <person name="Lescat M."/>
            <person name="Mangenot S."/>
            <person name="Martinez-Jehanne V."/>
            <person name="Matic I."/>
            <person name="Nassif X."/>
            <person name="Oztas S."/>
            <person name="Petit M.A."/>
            <person name="Pichon C."/>
            <person name="Rouy Z."/>
            <person name="Ruf C.S."/>
            <person name="Schneider D."/>
            <person name="Tourret J."/>
            <person name="Vacherie B."/>
            <person name="Vallenet D."/>
            <person name="Medigue C."/>
            <person name="Rocha E.P.C."/>
            <person name="Denamur E."/>
        </authorList>
    </citation>
    <scope>NUCLEOTIDE SEQUENCE [LARGE SCALE GENOMIC DNA]</scope>
    <source>
        <strain>55989 / EAEC</strain>
    </source>
</reference>
<proteinExistence type="inferred from homology"/>
<accession>B7LFZ3</accession>
<gene>
    <name evidence="1" type="primary">solA</name>
    <name type="ordered locus">EC55989_1172</name>
</gene>
<comment type="function">
    <text evidence="1">Catalyzes the oxidative demethylation of N-methyl-L-tryptophan.</text>
</comment>
<comment type="catalytic activity">
    <reaction evidence="1">
        <text>N(alpha)-methyl-L-tryptophan + O2 + H2O = L-tryptophan + formaldehyde + H2O2</text>
        <dbReference type="Rhea" id="RHEA:28006"/>
        <dbReference type="ChEBI" id="CHEBI:15377"/>
        <dbReference type="ChEBI" id="CHEBI:15379"/>
        <dbReference type="ChEBI" id="CHEBI:16240"/>
        <dbReference type="ChEBI" id="CHEBI:16842"/>
        <dbReference type="ChEBI" id="CHEBI:57283"/>
        <dbReference type="ChEBI" id="CHEBI:57912"/>
    </reaction>
</comment>
<comment type="cofactor">
    <cofactor evidence="1">
        <name>FAD</name>
        <dbReference type="ChEBI" id="CHEBI:57692"/>
    </cofactor>
    <text evidence="1">Binds 1 FAD per subunit.</text>
</comment>
<comment type="subunit">
    <text evidence="1">Monomer.</text>
</comment>
<comment type="similarity">
    <text evidence="1">Belongs to the MSOX/MTOX family. MTOX subfamily.</text>
</comment>
<keyword id="KW-0274">FAD</keyword>
<keyword id="KW-0285">Flavoprotein</keyword>
<keyword id="KW-0560">Oxidoreductase</keyword>
<keyword id="KW-1185">Reference proteome</keyword>
<feature type="chain" id="PRO_1000146173" description="N-methyl-L-tryptophan oxidase">
    <location>
        <begin position="1"/>
        <end position="372"/>
    </location>
</feature>
<feature type="binding site" evidence="1">
    <location>
        <begin position="4"/>
        <end position="34"/>
    </location>
    <ligand>
        <name>FAD</name>
        <dbReference type="ChEBI" id="CHEBI:57692"/>
    </ligand>
</feature>
<feature type="modified residue" description="S-8alpha-FAD cysteine" evidence="1">
    <location>
        <position position="308"/>
    </location>
</feature>
<name>MTOX_ECO55</name>
<sequence>MKYDLIIIGSGSVGAAAGYYATRAGLNVLMTDAHMPPHQHGSHHGDTRLIRHAYGEGEKYVPLVLRAQTLWDELSRHNEDDPIFVRSGVINLGPADSAFLANVAHSAEQWQLNVEKLDAQGIMARWPEIRVPDNYIGLFETDSGFLRSELAIKTWIQLAKEAGCAQLFNCPVTAIRHDDDGVTIETVDGEYQAKKAIVCAGTWVKDLLPELPVQPVRKVFAWYQADGRYSVKNKFPAFTGELPNGDQYYGFPAENDALKIGKHNGGQVIHSADERVPFAEVVSDGSEAFPFLRNVLPGIGCCLYGAACTYDNSPDEDFIIDTLPGHDNTLLITGLSGHGFKFASVLGEIAADFAQDKKSDFDLTPFRLSRFQ</sequence>
<protein>
    <recommendedName>
        <fullName evidence="1">N-methyl-L-tryptophan oxidase</fullName>
        <shortName evidence="1">MTOX</shortName>
        <ecNumber evidence="1">1.5.3.-</ecNumber>
    </recommendedName>
</protein>
<dbReference type="EC" id="1.5.3.-" evidence="1"/>
<dbReference type="EMBL" id="CU928145">
    <property type="protein sequence ID" value="CAU97031.1"/>
    <property type="molecule type" value="Genomic_DNA"/>
</dbReference>
<dbReference type="RefSeq" id="WP_000872815.1">
    <property type="nucleotide sequence ID" value="NC_011748.1"/>
</dbReference>
<dbReference type="SMR" id="B7LFZ3"/>
<dbReference type="KEGG" id="eck:EC55989_1172"/>
<dbReference type="HOGENOM" id="CLU_007884_2_1_6"/>
<dbReference type="Proteomes" id="UP000000746">
    <property type="component" value="Chromosome"/>
</dbReference>
<dbReference type="GO" id="GO:0005829">
    <property type="term" value="C:cytosol"/>
    <property type="evidence" value="ECO:0007669"/>
    <property type="project" value="TreeGrafter"/>
</dbReference>
<dbReference type="GO" id="GO:0050660">
    <property type="term" value="F:flavin adenine dinucleotide binding"/>
    <property type="evidence" value="ECO:0007669"/>
    <property type="project" value="InterPro"/>
</dbReference>
<dbReference type="GO" id="GO:0050131">
    <property type="term" value="F:N-methyl-L-amino-acid oxidase activity"/>
    <property type="evidence" value="ECO:0007669"/>
    <property type="project" value="InterPro"/>
</dbReference>
<dbReference type="GO" id="GO:0008115">
    <property type="term" value="F:sarcosine oxidase activity"/>
    <property type="evidence" value="ECO:0007669"/>
    <property type="project" value="TreeGrafter"/>
</dbReference>
<dbReference type="Gene3D" id="3.30.9.10">
    <property type="entry name" value="D-Amino Acid Oxidase, subunit A, domain 2"/>
    <property type="match status" value="1"/>
</dbReference>
<dbReference type="Gene3D" id="3.50.50.60">
    <property type="entry name" value="FAD/NAD(P)-binding domain"/>
    <property type="match status" value="1"/>
</dbReference>
<dbReference type="HAMAP" id="MF_00515">
    <property type="entry name" value="MTOX"/>
    <property type="match status" value="1"/>
</dbReference>
<dbReference type="InterPro" id="IPR006076">
    <property type="entry name" value="FAD-dep_OxRdtase"/>
</dbReference>
<dbReference type="InterPro" id="IPR036188">
    <property type="entry name" value="FAD/NAD-bd_sf"/>
</dbReference>
<dbReference type="InterPro" id="IPR023493">
    <property type="entry name" value="Me_Trp_Oxase_MTOX"/>
</dbReference>
<dbReference type="InterPro" id="IPR045170">
    <property type="entry name" value="MTOX"/>
</dbReference>
<dbReference type="NCBIfam" id="NF008425">
    <property type="entry name" value="PRK11259.1"/>
    <property type="match status" value="1"/>
</dbReference>
<dbReference type="PANTHER" id="PTHR10961:SF7">
    <property type="entry name" value="FAD DEPENDENT OXIDOREDUCTASE DOMAIN-CONTAINING PROTEIN"/>
    <property type="match status" value="1"/>
</dbReference>
<dbReference type="PANTHER" id="PTHR10961">
    <property type="entry name" value="PEROXISOMAL SARCOSINE OXIDASE"/>
    <property type="match status" value="1"/>
</dbReference>
<dbReference type="Pfam" id="PF01266">
    <property type="entry name" value="DAO"/>
    <property type="match status" value="1"/>
</dbReference>
<dbReference type="SUPFAM" id="SSF54373">
    <property type="entry name" value="FAD-linked reductases, C-terminal domain"/>
    <property type="match status" value="1"/>
</dbReference>
<dbReference type="SUPFAM" id="SSF51905">
    <property type="entry name" value="FAD/NAD(P)-binding domain"/>
    <property type="match status" value="1"/>
</dbReference>
<evidence type="ECO:0000255" key="1">
    <source>
        <dbReference type="HAMAP-Rule" id="MF_00515"/>
    </source>
</evidence>